<gene>
    <name type="primary">MMS21</name>
    <name type="synonym">HPY2</name>
    <name type="ordered locus">At3g15150</name>
    <name type="ORF">F4B12.6</name>
</gene>
<dbReference type="EC" id="2.3.2.-"/>
<dbReference type="EMBL" id="AP001299">
    <property type="protein sequence ID" value="BAB02569.1"/>
    <property type="status" value="ALT_SEQ"/>
    <property type="molecule type" value="Genomic_DNA"/>
</dbReference>
<dbReference type="EMBL" id="CP002686">
    <property type="protein sequence ID" value="AEE75625.1"/>
    <property type="molecule type" value="Genomic_DNA"/>
</dbReference>
<dbReference type="EMBL" id="BT026417">
    <property type="protein sequence ID" value="ABH04524.1"/>
    <property type="molecule type" value="mRNA"/>
</dbReference>
<dbReference type="EMBL" id="AK117616">
    <property type="protein sequence ID" value="BAC42272.1"/>
    <property type="molecule type" value="mRNA"/>
</dbReference>
<dbReference type="RefSeq" id="NP_188133.2">
    <property type="nucleotide sequence ID" value="NM_112378.3"/>
</dbReference>
<dbReference type="SMR" id="Q8GYH7"/>
<dbReference type="BioGRID" id="6080">
    <property type="interactions" value="4"/>
</dbReference>
<dbReference type="FunCoup" id="Q8GYH7">
    <property type="interactions" value="2782"/>
</dbReference>
<dbReference type="IntAct" id="Q8GYH7">
    <property type="interactions" value="2"/>
</dbReference>
<dbReference type="STRING" id="3702.Q8GYH7"/>
<dbReference type="iPTMnet" id="Q8GYH7"/>
<dbReference type="PaxDb" id="3702-AT3G15150.1"/>
<dbReference type="ProteomicsDB" id="249126"/>
<dbReference type="EnsemblPlants" id="AT3G15150.1">
    <property type="protein sequence ID" value="AT3G15150.1"/>
    <property type="gene ID" value="AT3G15150"/>
</dbReference>
<dbReference type="GeneID" id="820746"/>
<dbReference type="Gramene" id="AT3G15150.1">
    <property type="protein sequence ID" value="AT3G15150.1"/>
    <property type="gene ID" value="AT3G15150"/>
</dbReference>
<dbReference type="KEGG" id="ath:AT3G15150"/>
<dbReference type="Araport" id="AT3G15150"/>
<dbReference type="TAIR" id="AT3G15150">
    <property type="gene designation" value="HPY2"/>
</dbReference>
<dbReference type="eggNOG" id="KOG2979">
    <property type="taxonomic scope" value="Eukaryota"/>
</dbReference>
<dbReference type="HOGENOM" id="CLU_099247_0_0_1"/>
<dbReference type="InParanoid" id="Q8GYH7"/>
<dbReference type="OMA" id="VECKHIY"/>
<dbReference type="OrthoDB" id="26899at2759"/>
<dbReference type="PhylomeDB" id="Q8GYH7"/>
<dbReference type="UniPathway" id="UPA00886"/>
<dbReference type="PRO" id="PR:Q8GYH7"/>
<dbReference type="Proteomes" id="UP000006548">
    <property type="component" value="Chromosome 3"/>
</dbReference>
<dbReference type="ExpressionAtlas" id="Q8GYH7">
    <property type="expression patterns" value="baseline and differential"/>
</dbReference>
<dbReference type="GO" id="GO:0005737">
    <property type="term" value="C:cytoplasm"/>
    <property type="evidence" value="ECO:0007669"/>
    <property type="project" value="UniProtKB-SubCell"/>
</dbReference>
<dbReference type="GO" id="GO:0005634">
    <property type="term" value="C:nucleus"/>
    <property type="evidence" value="ECO:0000314"/>
    <property type="project" value="UniProtKB"/>
</dbReference>
<dbReference type="GO" id="GO:0030915">
    <property type="term" value="C:Smc5-Smc6 complex"/>
    <property type="evidence" value="ECO:0007669"/>
    <property type="project" value="InterPro"/>
</dbReference>
<dbReference type="GO" id="GO:0019789">
    <property type="term" value="F:SUMO transferase activity"/>
    <property type="evidence" value="ECO:0000314"/>
    <property type="project" value="UniProtKB"/>
</dbReference>
<dbReference type="GO" id="GO:0008270">
    <property type="term" value="F:zinc ion binding"/>
    <property type="evidence" value="ECO:0007669"/>
    <property type="project" value="UniProtKB-KW"/>
</dbReference>
<dbReference type="GO" id="GO:0009736">
    <property type="term" value="P:cytokinin-activated signaling pathway"/>
    <property type="evidence" value="ECO:0007669"/>
    <property type="project" value="UniProtKB-KW"/>
</dbReference>
<dbReference type="GO" id="GO:0006974">
    <property type="term" value="P:DNA damage response"/>
    <property type="evidence" value="ECO:0000315"/>
    <property type="project" value="TAIR"/>
</dbReference>
<dbReference type="GO" id="GO:0000724">
    <property type="term" value="P:double-strand break repair via homologous recombination"/>
    <property type="evidence" value="ECO:0007669"/>
    <property type="project" value="InterPro"/>
</dbReference>
<dbReference type="GO" id="GO:0060250">
    <property type="term" value="P:germ-line stem-cell niche homeostasis"/>
    <property type="evidence" value="ECO:0000315"/>
    <property type="project" value="TAIR"/>
</dbReference>
<dbReference type="GO" id="GO:0032876">
    <property type="term" value="P:negative regulation of DNA endoreduplication"/>
    <property type="evidence" value="ECO:0000315"/>
    <property type="project" value="TAIR"/>
</dbReference>
<dbReference type="GO" id="GO:0008284">
    <property type="term" value="P:positive regulation of cell population proliferation"/>
    <property type="evidence" value="ECO:0000315"/>
    <property type="project" value="UniProtKB"/>
</dbReference>
<dbReference type="GO" id="GO:0080038">
    <property type="term" value="P:positive regulation of cytokinin-activated signaling pathway"/>
    <property type="evidence" value="ECO:0000315"/>
    <property type="project" value="UniProtKB"/>
</dbReference>
<dbReference type="GO" id="GO:0045931">
    <property type="term" value="P:positive regulation of mitotic cell cycle"/>
    <property type="evidence" value="ECO:0000315"/>
    <property type="project" value="UniProtKB"/>
</dbReference>
<dbReference type="GO" id="GO:0016925">
    <property type="term" value="P:protein sumoylation"/>
    <property type="evidence" value="ECO:0000314"/>
    <property type="project" value="UniProtKB"/>
</dbReference>
<dbReference type="GO" id="GO:0048509">
    <property type="term" value="P:regulation of meristem development"/>
    <property type="evidence" value="ECO:0000315"/>
    <property type="project" value="TAIR"/>
</dbReference>
<dbReference type="GO" id="GO:0010082">
    <property type="term" value="P:regulation of root meristem growth"/>
    <property type="evidence" value="ECO:0000315"/>
    <property type="project" value="UniProtKB"/>
</dbReference>
<dbReference type="CDD" id="cd16651">
    <property type="entry name" value="SPL-RING_NSE2"/>
    <property type="match status" value="1"/>
</dbReference>
<dbReference type="FunFam" id="3.30.40.10:FF:001203">
    <property type="entry name" value="E3 SUMO-protein ligase MMS21"/>
    <property type="match status" value="1"/>
</dbReference>
<dbReference type="Gene3D" id="3.30.40.10">
    <property type="entry name" value="Zinc/RING finger domain, C3HC4 (zinc finger)"/>
    <property type="match status" value="1"/>
</dbReference>
<dbReference type="InterPro" id="IPR026846">
    <property type="entry name" value="Nse2(Mms21)"/>
</dbReference>
<dbReference type="InterPro" id="IPR004181">
    <property type="entry name" value="Znf_MIZ"/>
</dbReference>
<dbReference type="InterPro" id="IPR013083">
    <property type="entry name" value="Znf_RING/FYVE/PHD"/>
</dbReference>
<dbReference type="PANTHER" id="PTHR21330">
    <property type="entry name" value="E3 SUMO-PROTEIN LIGASE NSE2"/>
    <property type="match status" value="1"/>
</dbReference>
<dbReference type="PANTHER" id="PTHR21330:SF1">
    <property type="entry name" value="E3 SUMO-PROTEIN LIGASE NSE2"/>
    <property type="match status" value="1"/>
</dbReference>
<dbReference type="Pfam" id="PF11789">
    <property type="entry name" value="zf-Nse"/>
    <property type="match status" value="1"/>
</dbReference>
<dbReference type="SUPFAM" id="SSF57850">
    <property type="entry name" value="RING/U-box"/>
    <property type="match status" value="1"/>
</dbReference>
<dbReference type="PROSITE" id="PS51044">
    <property type="entry name" value="ZF_SP_RING"/>
    <property type="match status" value="1"/>
</dbReference>
<evidence type="ECO:0000255" key="1">
    <source>
        <dbReference type="PROSITE-ProRule" id="PRU00452"/>
    </source>
</evidence>
<evidence type="ECO:0000269" key="2">
    <source>
    </source>
</evidence>
<evidence type="ECO:0000269" key="3">
    <source>
    </source>
</evidence>
<evidence type="ECO:0000305" key="4"/>
<evidence type="ECO:0007744" key="5">
    <source>
    </source>
</evidence>
<accession>Q8GYH7</accession>
<accession>Q9LIM0</accession>
<proteinExistence type="evidence at protein level"/>
<organism>
    <name type="scientific">Arabidopsis thaliana</name>
    <name type="common">Mouse-ear cress</name>
    <dbReference type="NCBI Taxonomy" id="3702"/>
    <lineage>
        <taxon>Eukaryota</taxon>
        <taxon>Viridiplantae</taxon>
        <taxon>Streptophyta</taxon>
        <taxon>Embryophyta</taxon>
        <taxon>Tracheophyta</taxon>
        <taxon>Spermatophyta</taxon>
        <taxon>Magnoliopsida</taxon>
        <taxon>eudicotyledons</taxon>
        <taxon>Gunneridae</taxon>
        <taxon>Pentapetalae</taxon>
        <taxon>rosids</taxon>
        <taxon>malvids</taxon>
        <taxon>Brassicales</taxon>
        <taxon>Brassicaceae</taxon>
        <taxon>Camelineae</taxon>
        <taxon>Arabidopsis</taxon>
    </lineage>
</organism>
<comment type="function">
    <text evidence="2 3">E3 SUMO-protein ligase that modulates cell cycle progression and functions as a repressor of endocycle onset in meristems. May function downstream of the meristem patterning transcription factors PLETHORA 1 and 2 (PLT1 and PLT2) in root meristem development. Modulates the expression of the mitotic cyclins CYCB1-1 and CYCB1-2 and cyclin-dependent kinases CDKB1-1 and CDKB2-1 in root meristem. Involved in cytokinin signaling in root development.</text>
</comment>
<comment type="pathway">
    <text>Protein modification; protein sumoylation.</text>
</comment>
<comment type="subunit">
    <text evidence="3">Interacts with SCE1.</text>
</comment>
<comment type="interaction">
    <interactant intactId="EBI-25512915">
        <id>Q8GYH7</id>
    </interactant>
    <interactant intactId="EBI-25512239">
        <id>Q9ZR37</id>
        <label>DSPTP1</label>
    </interactant>
    <organismsDiffer>false</organismsDiffer>
    <experiments>3</experiments>
</comment>
<comment type="interaction">
    <interactant intactId="EBI-25512915">
        <id>Q8GYH7</id>
    </interactant>
    <interactant intactId="EBI-15192297">
        <id>Q9LQF0</id>
        <label>TCP23</label>
    </interactant>
    <organismsDiffer>false</organismsDiffer>
    <experiments>3</experiments>
</comment>
<comment type="subcellular location">
    <subcellularLocation>
        <location evidence="2 3">Nucleus</location>
    </subcellularLocation>
    <subcellularLocation>
        <location evidence="3">Cytoplasm</location>
    </subcellularLocation>
</comment>
<comment type="PTM">
    <text evidence="2 3">Sumoylated, possibly via autosumoylation.</text>
</comment>
<comment type="disruption phenotype">
    <text evidence="2 3">Dwarf plants with short roots and defective meristems.</text>
</comment>
<comment type="similarity">
    <text evidence="4">Belongs to the NSE2 family.</text>
</comment>
<comment type="sequence caution" evidence="4">
    <conflict type="erroneous gene model prediction">
        <sequence resource="EMBL-CDS" id="BAB02569"/>
    </conflict>
</comment>
<reference key="1">
    <citation type="journal article" date="2000" name="DNA Res.">
        <title>Structural analysis of Arabidopsis thaliana chromosome 3. II. Sequence features of the 4,251,695 bp regions covered by 90 P1, TAC and BAC clones.</title>
        <authorList>
            <person name="Kaneko T."/>
            <person name="Katoh T."/>
            <person name="Sato S."/>
            <person name="Nakamura Y."/>
            <person name="Asamizu E."/>
            <person name="Tabata S."/>
        </authorList>
    </citation>
    <scope>NUCLEOTIDE SEQUENCE [LARGE SCALE GENOMIC DNA]</scope>
    <source>
        <strain>cv. Columbia</strain>
    </source>
</reference>
<reference key="2">
    <citation type="journal article" date="2017" name="Plant J.">
        <title>Araport11: a complete reannotation of the Arabidopsis thaliana reference genome.</title>
        <authorList>
            <person name="Cheng C.Y."/>
            <person name="Krishnakumar V."/>
            <person name="Chan A.P."/>
            <person name="Thibaud-Nissen F."/>
            <person name="Schobel S."/>
            <person name="Town C.D."/>
        </authorList>
    </citation>
    <scope>GENOME REANNOTATION</scope>
    <source>
        <strain>cv. Columbia</strain>
    </source>
</reference>
<reference key="3">
    <citation type="journal article" date="2002" name="Science">
        <title>Functional annotation of a full-length Arabidopsis cDNA collection.</title>
        <authorList>
            <person name="Seki M."/>
            <person name="Narusaka M."/>
            <person name="Kamiya A."/>
            <person name="Ishida J."/>
            <person name="Satou M."/>
            <person name="Sakurai T."/>
            <person name="Nakajima M."/>
            <person name="Enju A."/>
            <person name="Akiyama K."/>
            <person name="Oono Y."/>
            <person name="Muramatsu M."/>
            <person name="Hayashizaki Y."/>
            <person name="Kawai J."/>
            <person name="Carninci P."/>
            <person name="Itoh M."/>
            <person name="Ishii Y."/>
            <person name="Arakawa T."/>
            <person name="Shibata K."/>
            <person name="Shinagawa A."/>
            <person name="Shinozaki K."/>
        </authorList>
    </citation>
    <scope>NUCLEOTIDE SEQUENCE [LARGE SCALE MRNA]</scope>
    <source>
        <strain>cv. Columbia</strain>
    </source>
</reference>
<reference key="4">
    <citation type="submission" date="2006-08" db="EMBL/GenBank/DDBJ databases">
        <title>Arabidopsis ORF Clones.</title>
        <authorList>
            <person name="Quinitio C."/>
            <person name="Chen H."/>
            <person name="Kim C.J."/>
            <person name="Shinn P."/>
            <person name="Ecker J.R."/>
        </authorList>
    </citation>
    <scope>NUCLEOTIDE SEQUENCE [LARGE SCALE MRNA]</scope>
    <source>
        <strain>cv. Columbia</strain>
    </source>
</reference>
<reference key="5">
    <citation type="journal article" date="2009" name="Plant Cell">
        <title>SUMO E3 ligase HIGH PLOIDY2 regulates endocycle onset and meristem maintenance in Arabidopsis.</title>
        <authorList>
            <person name="Ishida T."/>
            <person name="Fujiwara S."/>
            <person name="Miura K."/>
            <person name="Stacey N."/>
            <person name="Yoshimura M."/>
            <person name="Schneider K."/>
            <person name="Adachi S."/>
            <person name="Minamisawa K."/>
            <person name="Umeda M."/>
            <person name="Sugimoto K."/>
        </authorList>
    </citation>
    <scope>FUNCTION</scope>
    <scope>SUMOYLATION</scope>
    <scope>SUBCELLULAR LOCATION</scope>
    <scope>DISRUPTION PHENOTYPE</scope>
    <scope>MUTAGENESIS OF CYS-178 AND HIS-180</scope>
</reference>
<reference key="6">
    <citation type="journal article" date="2009" name="Plant J.">
        <title>The Arabidopsis SUMO E3 ligase AtMMS21, a homologue of NSE2/MMS21, regulates cell proliferation in the root.</title>
        <authorList>
            <person name="Huang L."/>
            <person name="Yang S."/>
            <person name="Zhang S."/>
            <person name="Liu M."/>
            <person name="Lai J."/>
            <person name="Qi Y."/>
            <person name="Shi S."/>
            <person name="Wang J."/>
            <person name="Wang Y."/>
            <person name="Xie Q."/>
            <person name="Yang C."/>
        </authorList>
    </citation>
    <scope>FUNCTION</scope>
    <scope>SUMOYLATION</scope>
    <scope>INTERACTION WITH SCE1</scope>
    <scope>SUBCELLULAR LOCATION</scope>
    <scope>DISRUPTION PHENOTYPE</scope>
</reference>
<reference key="7">
    <citation type="journal article" date="2012" name="Mol. Cell. Proteomics">
        <title>Comparative large-scale characterisation of plant vs. mammal proteins reveals similar and idiosyncratic N-alpha acetylation features.</title>
        <authorList>
            <person name="Bienvenut W.V."/>
            <person name="Sumpton D."/>
            <person name="Martinez A."/>
            <person name="Lilla S."/>
            <person name="Espagne C."/>
            <person name="Meinnel T."/>
            <person name="Giglione C."/>
        </authorList>
    </citation>
    <scope>ACETYLATION [LARGE SCALE ANALYSIS] AT ALA-2</scope>
    <scope>CLEAVAGE OF INITIATOR METHIONINE [LARGE SCALE ANALYSIS]</scope>
    <scope>IDENTIFICATION BY MASS SPECTROMETRY [LARGE SCALE ANALYSIS]</scope>
</reference>
<keyword id="KW-0007">Acetylation</keyword>
<keyword id="KW-0131">Cell cycle</keyword>
<keyword id="KW-0932">Cytokinin signaling pathway</keyword>
<keyword id="KW-0963">Cytoplasm</keyword>
<keyword id="KW-0479">Metal-binding</keyword>
<keyword id="KW-0539">Nucleus</keyword>
<keyword id="KW-1185">Reference proteome</keyword>
<keyword id="KW-0808">Transferase</keyword>
<keyword id="KW-0832">Ubl conjugation</keyword>
<keyword id="KW-0833">Ubl conjugation pathway</keyword>
<keyword id="KW-0862">Zinc</keyword>
<keyword id="KW-0863">Zinc-finger</keyword>
<protein>
    <recommendedName>
        <fullName>E3 SUMO-protein ligase MMS21</fullName>
        <ecNumber>2.3.2.-</ecNumber>
    </recommendedName>
    <alternativeName>
        <fullName evidence="4">E3 SUMO-protein transferase MMS21</fullName>
    </alternativeName>
    <alternativeName>
        <fullName>MMS21 homolog</fullName>
        <shortName>AtMMS21</shortName>
    </alternativeName>
    <alternativeName>
        <fullName>Protein HIGH PLOIDY 2</fullName>
    </alternativeName>
</protein>
<sequence>MASASSSDGVAGRIQNASLVLVSDNSSTLADIRKAVAMMKNIAVQLEKENQTDKVKDLENSVAELLDLHSDCNHRSTAIQSVANRYQPVEQLTDFKKLLDDEFTKLKATPSSVPQNDHLMRQFREAVWNVHHAGEPMPGDDDEDIVMTSTQCPLLNMTCPLSGKPVTELADPVRSMDCRHVYEKSVILHYIVNNPNANCPVAGCRGKLQNSKVICDAMLKFEIEEMRSLNKQSNRAEVIEDFTEDVDED</sequence>
<name>NSE2_ARATH</name>
<feature type="initiator methionine" description="Removed" evidence="5">
    <location>
        <position position="1"/>
    </location>
</feature>
<feature type="chain" id="PRO_0000396014" description="E3 SUMO-protein ligase MMS21">
    <location>
        <begin position="2"/>
        <end position="249"/>
    </location>
</feature>
<feature type="zinc finger region" description="SP-RING-type" evidence="1">
    <location>
        <begin position="141"/>
        <end position="228"/>
    </location>
</feature>
<feature type="binding site" evidence="1">
    <location>
        <position position="178"/>
    </location>
    <ligand>
        <name>Zn(2+)</name>
        <dbReference type="ChEBI" id="CHEBI:29105"/>
    </ligand>
</feature>
<feature type="binding site" evidence="1">
    <location>
        <position position="180"/>
    </location>
    <ligand>
        <name>Zn(2+)</name>
        <dbReference type="ChEBI" id="CHEBI:29105"/>
    </ligand>
</feature>
<feature type="binding site" evidence="1">
    <location>
        <position position="199"/>
    </location>
    <ligand>
        <name>Zn(2+)</name>
        <dbReference type="ChEBI" id="CHEBI:29105"/>
    </ligand>
</feature>
<feature type="binding site" evidence="1">
    <location>
        <position position="204"/>
    </location>
    <ligand>
        <name>Zn(2+)</name>
        <dbReference type="ChEBI" id="CHEBI:29105"/>
    </ligand>
</feature>
<feature type="modified residue" description="N-acetylalanine" evidence="5">
    <location>
        <position position="2"/>
    </location>
</feature>
<feature type="mutagenesis site" description="Loss of function; when associated with A-180." evidence="2">
    <original>C</original>
    <variation>S</variation>
    <location>
        <position position="178"/>
    </location>
</feature>
<feature type="mutagenesis site" description="Loss of function; when associated with S-178. Loss of autosumoylation." evidence="2">
    <original>H</original>
    <variation>A</variation>
    <location>
        <position position="180"/>
    </location>
</feature>